<accession>B7N3X8</accession>
<feature type="chain" id="PRO_1000191280" description="Cell division topological specificity factor">
    <location>
        <begin position="1"/>
        <end position="88"/>
    </location>
</feature>
<keyword id="KW-0131">Cell cycle</keyword>
<keyword id="KW-0132">Cell division</keyword>
<sequence length="88" mass="10235">MALLDFFLSRKKNTANIAKERLQIIVAERRRSDAEPHYLPQLRKDILEVICKYVQIDPEMVTVQLEQKDGDISILELNVTLPEAEELK</sequence>
<name>MINE_ECOLU</name>
<organism>
    <name type="scientific">Escherichia coli O17:K52:H18 (strain UMN026 / ExPEC)</name>
    <dbReference type="NCBI Taxonomy" id="585056"/>
    <lineage>
        <taxon>Bacteria</taxon>
        <taxon>Pseudomonadati</taxon>
        <taxon>Pseudomonadota</taxon>
        <taxon>Gammaproteobacteria</taxon>
        <taxon>Enterobacterales</taxon>
        <taxon>Enterobacteriaceae</taxon>
        <taxon>Escherichia</taxon>
    </lineage>
</organism>
<reference key="1">
    <citation type="journal article" date="2009" name="PLoS Genet.">
        <title>Organised genome dynamics in the Escherichia coli species results in highly diverse adaptive paths.</title>
        <authorList>
            <person name="Touchon M."/>
            <person name="Hoede C."/>
            <person name="Tenaillon O."/>
            <person name="Barbe V."/>
            <person name="Baeriswyl S."/>
            <person name="Bidet P."/>
            <person name="Bingen E."/>
            <person name="Bonacorsi S."/>
            <person name="Bouchier C."/>
            <person name="Bouvet O."/>
            <person name="Calteau A."/>
            <person name="Chiapello H."/>
            <person name="Clermont O."/>
            <person name="Cruveiller S."/>
            <person name="Danchin A."/>
            <person name="Diard M."/>
            <person name="Dossat C."/>
            <person name="Karoui M.E."/>
            <person name="Frapy E."/>
            <person name="Garry L."/>
            <person name="Ghigo J.M."/>
            <person name="Gilles A.M."/>
            <person name="Johnson J."/>
            <person name="Le Bouguenec C."/>
            <person name="Lescat M."/>
            <person name="Mangenot S."/>
            <person name="Martinez-Jehanne V."/>
            <person name="Matic I."/>
            <person name="Nassif X."/>
            <person name="Oztas S."/>
            <person name="Petit M.A."/>
            <person name="Pichon C."/>
            <person name="Rouy Z."/>
            <person name="Ruf C.S."/>
            <person name="Schneider D."/>
            <person name="Tourret J."/>
            <person name="Vacherie B."/>
            <person name="Vallenet D."/>
            <person name="Medigue C."/>
            <person name="Rocha E.P.C."/>
            <person name="Denamur E."/>
        </authorList>
    </citation>
    <scope>NUCLEOTIDE SEQUENCE [LARGE SCALE GENOMIC DNA]</scope>
    <source>
        <strain>UMN026 / ExPEC</strain>
    </source>
</reference>
<gene>
    <name evidence="1" type="primary">minE</name>
    <name type="ordered locus">ECUMN_1463</name>
</gene>
<dbReference type="EMBL" id="CU928163">
    <property type="protein sequence ID" value="CAR12671.1"/>
    <property type="molecule type" value="Genomic_DNA"/>
</dbReference>
<dbReference type="RefSeq" id="WP_001185665.1">
    <property type="nucleotide sequence ID" value="NC_011751.1"/>
</dbReference>
<dbReference type="RefSeq" id="YP_002412208.1">
    <property type="nucleotide sequence ID" value="NC_011751.1"/>
</dbReference>
<dbReference type="SMR" id="B7N3X8"/>
<dbReference type="STRING" id="585056.ECUMN_1463"/>
<dbReference type="GeneID" id="93776260"/>
<dbReference type="KEGG" id="eum:ECUMN_1463"/>
<dbReference type="PATRIC" id="fig|585056.7.peg.1658"/>
<dbReference type="HOGENOM" id="CLU_137929_2_2_6"/>
<dbReference type="Proteomes" id="UP000007097">
    <property type="component" value="Chromosome"/>
</dbReference>
<dbReference type="GO" id="GO:0051301">
    <property type="term" value="P:cell division"/>
    <property type="evidence" value="ECO:0007669"/>
    <property type="project" value="UniProtKB-KW"/>
</dbReference>
<dbReference type="GO" id="GO:0032955">
    <property type="term" value="P:regulation of division septum assembly"/>
    <property type="evidence" value="ECO:0007669"/>
    <property type="project" value="InterPro"/>
</dbReference>
<dbReference type="FunFam" id="3.30.1070.10:FF:000001">
    <property type="entry name" value="Cell division topological specificity factor"/>
    <property type="match status" value="1"/>
</dbReference>
<dbReference type="Gene3D" id="3.30.1070.10">
    <property type="entry name" value="Cell division topological specificity factor MinE"/>
    <property type="match status" value="1"/>
</dbReference>
<dbReference type="HAMAP" id="MF_00262">
    <property type="entry name" value="MinE"/>
    <property type="match status" value="1"/>
</dbReference>
<dbReference type="InterPro" id="IPR005527">
    <property type="entry name" value="MinE"/>
</dbReference>
<dbReference type="InterPro" id="IPR036707">
    <property type="entry name" value="MinE_sf"/>
</dbReference>
<dbReference type="NCBIfam" id="TIGR01215">
    <property type="entry name" value="minE"/>
    <property type="match status" value="1"/>
</dbReference>
<dbReference type="NCBIfam" id="NF001422">
    <property type="entry name" value="PRK00296.1"/>
    <property type="match status" value="1"/>
</dbReference>
<dbReference type="Pfam" id="PF03776">
    <property type="entry name" value="MinE"/>
    <property type="match status" value="1"/>
</dbReference>
<dbReference type="SUPFAM" id="SSF55229">
    <property type="entry name" value="Cell division protein MinE topological specificity domain"/>
    <property type="match status" value="1"/>
</dbReference>
<evidence type="ECO:0000255" key="1">
    <source>
        <dbReference type="HAMAP-Rule" id="MF_00262"/>
    </source>
</evidence>
<proteinExistence type="inferred from homology"/>
<protein>
    <recommendedName>
        <fullName evidence="1">Cell division topological specificity factor</fullName>
    </recommendedName>
</protein>
<comment type="function">
    <text evidence="1">Prevents the cell division inhibition by proteins MinC and MinD at internal division sites while permitting inhibition at polar sites. This ensures cell division at the proper site by restricting the formation of a division septum at the midpoint of the long axis of the cell.</text>
</comment>
<comment type="similarity">
    <text evidence="1">Belongs to the MinE family.</text>
</comment>